<accession>P07267</accession>
<accession>D6W3L4</accession>
<feature type="signal peptide" evidence="4">
    <location>
        <begin position="1"/>
        <end position="22"/>
    </location>
</feature>
<feature type="propeptide" id="PRO_0000025873" description="Activation peptide" evidence="5">
    <location>
        <begin position="23"/>
        <end position="76"/>
    </location>
</feature>
<feature type="chain" id="PRO_0000025874" description="Saccharopepsin">
    <location>
        <begin position="77"/>
        <end position="405"/>
    </location>
</feature>
<feature type="domain" description="Peptidase A1" evidence="1">
    <location>
        <begin position="91"/>
        <end position="402"/>
    </location>
</feature>
<feature type="active site" evidence="2">
    <location>
        <position position="109"/>
    </location>
</feature>
<feature type="active site" evidence="2">
    <location>
        <position position="294"/>
    </location>
</feature>
<feature type="glycosylation site" description="N-linked (GlcNAc...) asparagine">
    <location>
        <position position="144"/>
    </location>
</feature>
<feature type="glycosylation site" description="N-linked (GlcNAc...) asparagine">
    <location>
        <position position="345"/>
    </location>
</feature>
<feature type="disulfide bond">
    <location>
        <begin position="122"/>
        <end position="127"/>
    </location>
</feature>
<feature type="disulfide bond">
    <location>
        <begin position="328"/>
        <end position="361"/>
    </location>
</feature>
<feature type="mutagenesis site" description="Inactivation." evidence="3">
    <original>D</original>
    <variation>A</variation>
    <location>
        <position position="294"/>
    </location>
</feature>
<feature type="strand" evidence="7">
    <location>
        <begin position="79"/>
        <end position="82"/>
    </location>
</feature>
<feature type="strand" evidence="7">
    <location>
        <begin position="84"/>
        <end position="86"/>
    </location>
</feature>
<feature type="turn" evidence="7">
    <location>
        <begin position="87"/>
        <end position="89"/>
    </location>
</feature>
<feature type="strand" evidence="7">
    <location>
        <begin position="90"/>
        <end position="97"/>
    </location>
</feature>
<feature type="turn" evidence="7">
    <location>
        <begin position="98"/>
        <end position="101"/>
    </location>
</feature>
<feature type="strand" evidence="7">
    <location>
        <begin position="102"/>
        <end position="109"/>
    </location>
</feature>
<feature type="strand" evidence="7">
    <location>
        <begin position="115"/>
        <end position="119"/>
    </location>
</feature>
<feature type="helix" evidence="7">
    <location>
        <begin position="125"/>
        <end position="128"/>
    </location>
</feature>
<feature type="helix" evidence="7">
    <location>
        <begin position="135"/>
        <end position="137"/>
    </location>
</feature>
<feature type="strand" evidence="7">
    <location>
        <begin position="142"/>
        <end position="152"/>
    </location>
</feature>
<feature type="strand" evidence="7">
    <location>
        <begin position="155"/>
        <end position="168"/>
    </location>
</feature>
<feature type="strand" evidence="7">
    <location>
        <begin position="171"/>
        <end position="183"/>
    </location>
</feature>
<feature type="helix" evidence="7">
    <location>
        <begin position="186"/>
        <end position="189"/>
    </location>
</feature>
<feature type="strand" evidence="7">
    <location>
        <begin position="195"/>
        <end position="199"/>
    </location>
</feature>
<feature type="helix" evidence="7">
    <location>
        <begin position="203"/>
        <end position="205"/>
    </location>
</feature>
<feature type="helix" evidence="7">
    <location>
        <begin position="207"/>
        <end position="209"/>
    </location>
</feature>
<feature type="helix" evidence="7">
    <location>
        <begin position="213"/>
        <end position="219"/>
    </location>
</feature>
<feature type="strand" evidence="7">
    <location>
        <begin position="224"/>
        <end position="232"/>
    </location>
</feature>
<feature type="helix" evidence="7">
    <location>
        <begin position="235"/>
        <end position="237"/>
    </location>
</feature>
<feature type="strand" evidence="7">
    <location>
        <begin position="240"/>
        <end position="249"/>
    </location>
</feature>
<feature type="helix" evidence="7">
    <location>
        <begin position="252"/>
        <end position="254"/>
    </location>
</feature>
<feature type="strand" evidence="7">
    <location>
        <begin position="255"/>
        <end position="263"/>
    </location>
</feature>
<feature type="turn" evidence="7">
    <location>
        <begin position="267"/>
        <end position="270"/>
    </location>
</feature>
<feature type="strand" evidence="7">
    <location>
        <begin position="271"/>
        <end position="279"/>
    </location>
</feature>
<feature type="strand" evidence="7">
    <location>
        <begin position="282"/>
        <end position="285"/>
    </location>
</feature>
<feature type="strand" evidence="7">
    <location>
        <begin position="290"/>
        <end position="293"/>
    </location>
</feature>
<feature type="strand" evidence="7">
    <location>
        <begin position="300"/>
        <end position="302"/>
    </location>
</feature>
<feature type="helix" evidence="7">
    <location>
        <begin position="304"/>
        <end position="314"/>
    </location>
</feature>
<feature type="strand" evidence="8">
    <location>
        <begin position="317"/>
        <end position="319"/>
    </location>
</feature>
<feature type="strand" evidence="7">
    <location>
        <begin position="322"/>
        <end position="326"/>
    </location>
</feature>
<feature type="helix" evidence="7">
    <location>
        <begin position="328"/>
        <end position="333"/>
    </location>
</feature>
<feature type="strand" evidence="7">
    <location>
        <begin position="337"/>
        <end position="341"/>
    </location>
</feature>
<feature type="strand" evidence="7">
    <location>
        <begin position="344"/>
        <end position="348"/>
    </location>
</feature>
<feature type="turn" evidence="7">
    <location>
        <begin position="350"/>
        <end position="352"/>
    </location>
</feature>
<feature type="strand" evidence="7">
    <location>
        <begin position="353"/>
        <end position="357"/>
    </location>
</feature>
<feature type="strand" evidence="7">
    <location>
        <begin position="360"/>
        <end position="363"/>
    </location>
</feature>
<feature type="strand" evidence="7">
    <location>
        <begin position="365"/>
        <end position="367"/>
    </location>
</feature>
<feature type="turn" evidence="7">
    <location>
        <begin position="372"/>
        <end position="374"/>
    </location>
</feature>
<feature type="strand" evidence="7">
    <location>
        <begin position="376"/>
        <end position="380"/>
    </location>
</feature>
<feature type="helix" evidence="7">
    <location>
        <begin position="382"/>
        <end position="385"/>
    </location>
</feature>
<feature type="strand" evidence="7">
    <location>
        <begin position="388"/>
        <end position="393"/>
    </location>
</feature>
<feature type="turn" evidence="7">
    <location>
        <begin position="394"/>
        <end position="397"/>
    </location>
</feature>
<feature type="strand" evidence="7">
    <location>
        <begin position="398"/>
        <end position="404"/>
    </location>
</feature>
<gene>
    <name type="primary">PEP4</name>
    <name type="synonym">PHO9</name>
    <name type="synonym">PRA1</name>
    <name type="ordered locus">YPL154C</name>
    <name type="ORF">P2585</name>
</gene>
<keyword id="KW-0002">3D-structure</keyword>
<keyword id="KW-0064">Aspartyl protease</keyword>
<keyword id="KW-0903">Direct protein sequencing</keyword>
<keyword id="KW-1015">Disulfide bond</keyword>
<keyword id="KW-0325">Glycoprotein</keyword>
<keyword id="KW-0378">Hydrolase</keyword>
<keyword id="KW-0645">Protease</keyword>
<keyword id="KW-1185">Reference proteome</keyword>
<keyword id="KW-0732">Signal</keyword>
<keyword id="KW-0926">Vacuole</keyword>
<keyword id="KW-0865">Zymogen</keyword>
<reference key="1">
    <citation type="journal article" date="1986" name="Mol. Cell. Biol.">
        <title>The PEP4 gene encodes an aspartyl protease implicated in the posttranslational regulation of Saccharomyces cerevisiae vacuolar hydrolases.</title>
        <authorList>
            <person name="Woolford C.A."/>
            <person name="Daniels L.B."/>
            <person name="Park F.J."/>
            <person name="Jones E.W."/>
            <person name="van Arsdell J.N."/>
            <person name="Innis M.A."/>
        </authorList>
    </citation>
    <scope>NUCLEOTIDE SEQUENCE [GENOMIC DNA]</scope>
</reference>
<reference key="2">
    <citation type="journal article" date="1986" name="Mol. Cell. Biol.">
        <title>PEP4 gene of Saccharomyces cerevisiae encodes proteinase A, a vacuolar enzyme required for processing of vacuolar precursors.</title>
        <authorList>
            <person name="Ammerer G."/>
            <person name="Hunter C.P."/>
            <person name="Rothman J.H."/>
            <person name="Saari G.C."/>
            <person name="Valls L.A."/>
            <person name="Stevens T.H."/>
        </authorList>
    </citation>
    <scope>NUCLEOTIDE SEQUENCE [GENOMIC DNA]</scope>
</reference>
<reference key="3">
    <citation type="journal article" date="1996" name="Yeast">
        <title>The sequence of 55 kb on the left arm of yeast chromosome XVI identifies a small nuclear RNA, a new putative protein kinase and two new putative regulators.</title>
        <authorList>
            <person name="Purnelle B."/>
            <person name="Coster F."/>
            <person name="Goffeau A."/>
        </authorList>
    </citation>
    <scope>NUCLEOTIDE SEQUENCE [GENOMIC DNA]</scope>
    <source>
        <strain>ATCC 204511 / S288c / AB972</strain>
    </source>
</reference>
<reference key="4">
    <citation type="journal article" date="1997" name="Nature">
        <title>The nucleotide sequence of Saccharomyces cerevisiae chromosome XVI.</title>
        <authorList>
            <person name="Bussey H."/>
            <person name="Storms R.K."/>
            <person name="Ahmed A."/>
            <person name="Albermann K."/>
            <person name="Allen E."/>
            <person name="Ansorge W."/>
            <person name="Araujo R."/>
            <person name="Aparicio A."/>
            <person name="Barrell B.G."/>
            <person name="Badcock K."/>
            <person name="Benes V."/>
            <person name="Botstein D."/>
            <person name="Bowman S."/>
            <person name="Brueckner M."/>
            <person name="Carpenter J."/>
            <person name="Cherry J.M."/>
            <person name="Chung E."/>
            <person name="Churcher C.M."/>
            <person name="Coster F."/>
            <person name="Davis K."/>
            <person name="Davis R.W."/>
            <person name="Dietrich F.S."/>
            <person name="Delius H."/>
            <person name="DiPaolo T."/>
            <person name="Dubois E."/>
            <person name="Duesterhoeft A."/>
            <person name="Duncan M."/>
            <person name="Floeth M."/>
            <person name="Fortin N."/>
            <person name="Friesen J.D."/>
            <person name="Fritz C."/>
            <person name="Goffeau A."/>
            <person name="Hall J."/>
            <person name="Hebling U."/>
            <person name="Heumann K."/>
            <person name="Hilbert H."/>
            <person name="Hillier L.W."/>
            <person name="Hunicke-Smith S."/>
            <person name="Hyman R.W."/>
            <person name="Johnston M."/>
            <person name="Kalman S."/>
            <person name="Kleine K."/>
            <person name="Komp C."/>
            <person name="Kurdi O."/>
            <person name="Lashkari D."/>
            <person name="Lew H."/>
            <person name="Lin A."/>
            <person name="Lin D."/>
            <person name="Louis E.J."/>
            <person name="Marathe R."/>
            <person name="Messenguy F."/>
            <person name="Mewes H.-W."/>
            <person name="Mirtipati S."/>
            <person name="Moestl D."/>
            <person name="Mueller-Auer S."/>
            <person name="Namath A."/>
            <person name="Nentwich U."/>
            <person name="Oefner P."/>
            <person name="Pearson D."/>
            <person name="Petel F.X."/>
            <person name="Pohl T.M."/>
            <person name="Purnelle B."/>
            <person name="Rajandream M.A."/>
            <person name="Rechmann S."/>
            <person name="Rieger M."/>
            <person name="Riles L."/>
            <person name="Roberts D."/>
            <person name="Schaefer M."/>
            <person name="Scharfe M."/>
            <person name="Scherens B."/>
            <person name="Schramm S."/>
            <person name="Schroeder M."/>
            <person name="Sdicu A.-M."/>
            <person name="Tettelin H."/>
            <person name="Urrestarazu L.A."/>
            <person name="Ushinsky S."/>
            <person name="Vierendeels F."/>
            <person name="Vissers S."/>
            <person name="Voss H."/>
            <person name="Walsh S.V."/>
            <person name="Wambutt R."/>
            <person name="Wang Y."/>
            <person name="Wedler E."/>
            <person name="Wedler H."/>
            <person name="Winnett E."/>
            <person name="Zhong W.-W."/>
            <person name="Zollner A."/>
            <person name="Vo D.H."/>
            <person name="Hani J."/>
        </authorList>
    </citation>
    <scope>NUCLEOTIDE SEQUENCE [LARGE SCALE GENOMIC DNA]</scope>
    <source>
        <strain>ATCC 204508 / S288c</strain>
    </source>
</reference>
<reference key="5">
    <citation type="journal article" date="2014" name="G3 (Bethesda)">
        <title>The reference genome sequence of Saccharomyces cerevisiae: Then and now.</title>
        <authorList>
            <person name="Engel S.R."/>
            <person name="Dietrich F.S."/>
            <person name="Fisk D.G."/>
            <person name="Binkley G."/>
            <person name="Balakrishnan R."/>
            <person name="Costanzo M.C."/>
            <person name="Dwight S.S."/>
            <person name="Hitz B.C."/>
            <person name="Karra K."/>
            <person name="Nash R.S."/>
            <person name="Weng S."/>
            <person name="Wong E.D."/>
            <person name="Lloyd P."/>
            <person name="Skrzypek M.S."/>
            <person name="Miyasato S.R."/>
            <person name="Simison M."/>
            <person name="Cherry J.M."/>
        </authorList>
    </citation>
    <scope>GENOME REANNOTATION</scope>
    <source>
        <strain>ATCC 204508 / S288c</strain>
    </source>
</reference>
<reference key="6">
    <citation type="journal article" date="1986" name="Carlsberg Res. Commun.">
        <title>Primary structure of the aspartic proteinase A from Saccharomyces cerevisiae.</title>
        <authorList>
            <person name="Dreyer T."/>
            <person name="Halkier B."/>
            <person name="Svendsen I."/>
            <person name="Ottesen M."/>
        </authorList>
    </citation>
    <scope>PROTEIN SEQUENCE OF 77-405</scope>
</reference>
<reference key="7">
    <citation type="journal article" date="1992" name="J. Cell Biol.">
        <title>Kinesin-related proteins required for assembly of the mitotic spindle.</title>
        <authorList>
            <person name="Roof D.M."/>
            <person name="Meluh P.B."/>
            <person name="Rose M.D."/>
        </authorList>
    </citation>
    <scope>NUCLEOTIDE SEQUENCE [GENOMIC DNA] OF 373-405</scope>
    <source>
        <strain>ATCC 204508 / S288c</strain>
    </source>
</reference>
<reference key="8">
    <citation type="journal article" date="1996" name="Yeast">
        <title>Vacuolar and extracellular maturation of Saccharomyces cerevisiae proteinase A.</title>
        <authorList>
            <person name="Wolff A.M."/>
            <person name="Dimn N."/>
            <person name="Petersen J.G.L."/>
        </authorList>
    </citation>
    <scope>PROTEIN SEQUENCE OF 23-31 AND 68-86</scope>
</reference>
<reference key="9">
    <citation type="journal article" date="1991" name="FEBS Lett.">
        <title>Biogenesis of the yeast vacuole (lysosome). Active site mutation in the vacuolar aspartate proteinase yscA blocks maturation of vacuolar proteinases.</title>
        <authorList>
            <person name="Rupp S."/>
            <person name="Hirsch H.H."/>
            <person name="Wolf D.H."/>
        </authorList>
    </citation>
    <scope>MUTAGENESIS OF ASP-294</scope>
</reference>
<reference key="10">
    <citation type="journal article" date="1997" name="J. Mol. Biol.">
        <title>The three-dimensional structure at 2.4-A resolution of glycosylated proteinase A from the lysosome-like vacuole of Saccharomyces cerevisiae.</title>
        <authorList>
            <person name="Aguilar C.F."/>
            <person name="Cronin N.B."/>
            <person name="Badasso M."/>
            <person name="Dreyer T."/>
            <person name="Newman M.P."/>
            <person name="Cooper J.B."/>
            <person name="Hoover D.J."/>
            <person name="Wood S.P."/>
            <person name="Johnson M.S."/>
            <person name="Blundell T.L."/>
        </authorList>
    </citation>
    <scope>X-RAY CRYSTALLOGRAPHY (2.4 ANGSTROMS)</scope>
</reference>
<comment type="function">
    <text>Aspartyl protease implicated in the post-translational regulation of S.cerevisiae vacuolar proteinases. Acts on YSCB, on YSCY and on itself.</text>
</comment>
<comment type="catalytic activity">
    <reaction>
        <text>Hydrolysis of proteins with broad specificity for peptide bonds. Cleaves -Leu-Leu-|-Val-Tyr- bond in a synthetic substrate. Does not act on esters of Tyr or Arg.</text>
        <dbReference type="EC" id="3.4.23.25"/>
    </reaction>
</comment>
<comment type="subcellular location">
    <subcellularLocation>
        <location>Vacuole</location>
    </subcellularLocation>
    <text>Lysosome-like vacuoles.</text>
</comment>
<comment type="similarity">
    <text evidence="6">Belongs to the peptidase A1 family.</text>
</comment>
<sequence length="405" mass="44499">MFSLKALLPLALLLVSANQVAAKVHKAKIYKHELSDEMKEVTFEQHLAHLGQKYLTQFEKANPEVVFSREHPFFTEGGHDVPLTNYLNAQYYTDITLGTPPQNFKVILDTGSSNLWVPSNECGSLACFLHSKYDHEASSSYKANGTEFAIQYGTGSLEGYISQDTLSIGDLTIPKQDFAEATSEPGLTFAFGKFDGILGLGYDTISVDKVVPPFYNAIQQDLLDEKRFAFYLGDTSKDTENGGEATFGGIDESKFKGDITWLPVRRKAYWEVKFEGIGLGDEYAELESHGAAIDTGTSLITLPSGLAEMINAEIGAKKGWTGQYTLDCNTRDNLPDLIFNFNGYNFTIGPYDYTLEVSGSCISAITPMDFPEPVGPLAIVGDAFLRKYYSIYDLGNNAVGLAKAI</sequence>
<dbReference type="EC" id="3.4.23.25"/>
<dbReference type="EMBL" id="M13358">
    <property type="protein sequence ID" value="AAB63975.1"/>
    <property type="molecule type" value="Genomic_DNA"/>
</dbReference>
<dbReference type="EMBL" id="X96770">
    <property type="protein sequence ID" value="CAA65567.1"/>
    <property type="molecule type" value="Genomic_DNA"/>
</dbReference>
<dbReference type="EMBL" id="Z73510">
    <property type="protein sequence ID" value="CAA97859.1"/>
    <property type="molecule type" value="Genomic_DNA"/>
</dbReference>
<dbReference type="EMBL" id="Z11963">
    <property type="protein sequence ID" value="CAA78020.1"/>
    <property type="molecule type" value="Genomic_DNA"/>
</dbReference>
<dbReference type="EMBL" id="BK006949">
    <property type="protein sequence ID" value="DAA11280.1"/>
    <property type="molecule type" value="Genomic_DNA"/>
</dbReference>
<dbReference type="PIR" id="A25379">
    <property type="entry name" value="A25379"/>
</dbReference>
<dbReference type="RefSeq" id="NP_015171.1">
    <property type="nucleotide sequence ID" value="NM_001183968.1"/>
</dbReference>
<dbReference type="PDB" id="1DP5">
    <property type="method" value="X-ray"/>
    <property type="resolution" value="2.20 A"/>
    <property type="chains" value="A=77-405"/>
</dbReference>
<dbReference type="PDB" id="1DPJ">
    <property type="method" value="X-ray"/>
    <property type="resolution" value="1.80 A"/>
    <property type="chains" value="A=77-405"/>
</dbReference>
<dbReference type="PDB" id="1FMU">
    <property type="method" value="X-ray"/>
    <property type="resolution" value="2.70 A"/>
    <property type="chains" value="A=77-405"/>
</dbReference>
<dbReference type="PDB" id="1FMX">
    <property type="method" value="X-ray"/>
    <property type="resolution" value="2.61 A"/>
    <property type="chains" value="A/B=77-405"/>
</dbReference>
<dbReference type="PDB" id="1FQ4">
    <property type="method" value="X-ray"/>
    <property type="resolution" value="2.70 A"/>
    <property type="chains" value="A=77-405"/>
</dbReference>
<dbReference type="PDB" id="1FQ5">
    <property type="method" value="X-ray"/>
    <property type="resolution" value="2.40 A"/>
    <property type="chains" value="A=77-405"/>
</dbReference>
<dbReference type="PDB" id="1FQ6">
    <property type="method" value="X-ray"/>
    <property type="resolution" value="2.70 A"/>
    <property type="chains" value="A=77-405"/>
</dbReference>
<dbReference type="PDB" id="1FQ7">
    <property type="method" value="X-ray"/>
    <property type="resolution" value="2.80 A"/>
    <property type="chains" value="A=77-405"/>
</dbReference>
<dbReference type="PDB" id="1FQ8">
    <property type="method" value="X-ray"/>
    <property type="resolution" value="2.80 A"/>
    <property type="chains" value="A=77-405"/>
</dbReference>
<dbReference type="PDB" id="1G0V">
    <property type="method" value="X-ray"/>
    <property type="resolution" value="2.00 A"/>
    <property type="chains" value="A=77-405"/>
</dbReference>
<dbReference type="PDB" id="2JXR">
    <property type="method" value="X-ray"/>
    <property type="resolution" value="2.40 A"/>
    <property type="chains" value="A=77-405"/>
</dbReference>
<dbReference type="PDBsum" id="1DP5"/>
<dbReference type="PDBsum" id="1DPJ"/>
<dbReference type="PDBsum" id="1FMU"/>
<dbReference type="PDBsum" id="1FMX"/>
<dbReference type="PDBsum" id="1FQ4"/>
<dbReference type="PDBsum" id="1FQ5"/>
<dbReference type="PDBsum" id="1FQ6"/>
<dbReference type="PDBsum" id="1FQ7"/>
<dbReference type="PDBsum" id="1FQ8"/>
<dbReference type="PDBsum" id="1G0V"/>
<dbReference type="PDBsum" id="2JXR"/>
<dbReference type="SMR" id="P07267"/>
<dbReference type="BioGRID" id="36029">
    <property type="interactions" value="222"/>
</dbReference>
<dbReference type="DIP" id="DIP-4442N"/>
<dbReference type="FunCoup" id="P07267">
    <property type="interactions" value="556"/>
</dbReference>
<dbReference type="IntAct" id="P07267">
    <property type="interactions" value="13"/>
</dbReference>
<dbReference type="MINT" id="P07267"/>
<dbReference type="STRING" id="4932.YPL154C"/>
<dbReference type="BindingDB" id="P07267"/>
<dbReference type="ChEMBL" id="CHEMBL4451"/>
<dbReference type="MEROPS" id="A01.018"/>
<dbReference type="GlyCosmos" id="P07267">
    <property type="glycosylation" value="2 sites, No reported glycans"/>
</dbReference>
<dbReference type="GlyGen" id="P07267">
    <property type="glycosylation" value="2 sites"/>
</dbReference>
<dbReference type="iPTMnet" id="P07267"/>
<dbReference type="PaxDb" id="4932-YPL154C"/>
<dbReference type="PeptideAtlas" id="P07267"/>
<dbReference type="EnsemblFungi" id="YPL154C_mRNA">
    <property type="protein sequence ID" value="YPL154C"/>
    <property type="gene ID" value="YPL154C"/>
</dbReference>
<dbReference type="GeneID" id="855949"/>
<dbReference type="KEGG" id="sce:YPL154C"/>
<dbReference type="AGR" id="SGD:S000006075"/>
<dbReference type="SGD" id="S000006075">
    <property type="gene designation" value="PEP4"/>
</dbReference>
<dbReference type="VEuPathDB" id="FungiDB:YPL154C"/>
<dbReference type="eggNOG" id="KOG1339">
    <property type="taxonomic scope" value="Eukaryota"/>
</dbReference>
<dbReference type="HOGENOM" id="CLU_013253_3_4_1"/>
<dbReference type="InParanoid" id="P07267"/>
<dbReference type="OMA" id="KYDHDAS"/>
<dbReference type="OrthoDB" id="771136at2759"/>
<dbReference type="BioCyc" id="YEAST:YPL154C-MONOMER"/>
<dbReference type="BRENDA" id="3.4.23.25">
    <property type="organism ID" value="984"/>
</dbReference>
<dbReference type="BioGRID-ORCS" id="855949">
    <property type="hits" value="5 hits in 10 CRISPR screens"/>
</dbReference>
<dbReference type="EvolutionaryTrace" id="P07267"/>
<dbReference type="PRO" id="PR:P07267"/>
<dbReference type="Proteomes" id="UP000002311">
    <property type="component" value="Chromosome XVI"/>
</dbReference>
<dbReference type="RNAct" id="P07267">
    <property type="molecule type" value="protein"/>
</dbReference>
<dbReference type="GO" id="GO:0005783">
    <property type="term" value="C:endoplasmic reticulum"/>
    <property type="evidence" value="ECO:0007005"/>
    <property type="project" value="SGD"/>
</dbReference>
<dbReference type="GO" id="GO:0000324">
    <property type="term" value="C:fungal-type vacuole"/>
    <property type="evidence" value="ECO:0000314"/>
    <property type="project" value="SGD"/>
</dbReference>
<dbReference type="GO" id="GO:0005739">
    <property type="term" value="C:mitochondrion"/>
    <property type="evidence" value="ECO:0007005"/>
    <property type="project" value="SGD"/>
</dbReference>
<dbReference type="GO" id="GO:0032991">
    <property type="term" value="C:protein-containing complex"/>
    <property type="evidence" value="ECO:0000314"/>
    <property type="project" value="CAFA"/>
</dbReference>
<dbReference type="GO" id="GO:0004190">
    <property type="term" value="F:aspartic-type endopeptidase activity"/>
    <property type="evidence" value="ECO:0000314"/>
    <property type="project" value="CAFA"/>
</dbReference>
<dbReference type="GO" id="GO:0097718">
    <property type="term" value="F:disordered domain specific binding"/>
    <property type="evidence" value="ECO:0000353"/>
    <property type="project" value="CAFA"/>
</dbReference>
<dbReference type="GO" id="GO:0070492">
    <property type="term" value="F:oligosaccharide binding"/>
    <property type="evidence" value="ECO:0000314"/>
    <property type="project" value="CAFA"/>
</dbReference>
<dbReference type="GO" id="GO:0008233">
    <property type="term" value="F:peptidase activity"/>
    <property type="evidence" value="ECO:0000314"/>
    <property type="project" value="SGD"/>
</dbReference>
<dbReference type="GO" id="GO:0006914">
    <property type="term" value="P:autophagy"/>
    <property type="evidence" value="ECO:0000315"/>
    <property type="project" value="SGD"/>
</dbReference>
<dbReference type="GO" id="GO:0032258">
    <property type="term" value="P:cytoplasm to vacuole targeting by the Cvt pathway"/>
    <property type="evidence" value="ECO:0000315"/>
    <property type="project" value="SGD"/>
</dbReference>
<dbReference type="GO" id="GO:0016236">
    <property type="term" value="P:macroautophagy"/>
    <property type="evidence" value="ECO:0000315"/>
    <property type="project" value="SGD"/>
</dbReference>
<dbReference type="GO" id="GO:0016237">
    <property type="term" value="P:microautophagy"/>
    <property type="evidence" value="ECO:0000315"/>
    <property type="project" value="SGD"/>
</dbReference>
<dbReference type="GO" id="GO:0000425">
    <property type="term" value="P:pexophagy"/>
    <property type="evidence" value="ECO:0000315"/>
    <property type="project" value="SGD"/>
</dbReference>
<dbReference type="GO" id="GO:0051603">
    <property type="term" value="P:proteolysis involved in protein catabolic process"/>
    <property type="evidence" value="ECO:0000315"/>
    <property type="project" value="SGD"/>
</dbReference>
<dbReference type="CDD" id="cd05488">
    <property type="entry name" value="Proteinase_A_fungi"/>
    <property type="match status" value="1"/>
</dbReference>
<dbReference type="FunFam" id="2.40.70.10:FF:000036">
    <property type="entry name" value="Vacuolar aspartic protease"/>
    <property type="match status" value="1"/>
</dbReference>
<dbReference type="FunFam" id="2.40.70.10:FF:000002">
    <property type="entry name" value="Vacuolar aspartic proteinase"/>
    <property type="match status" value="1"/>
</dbReference>
<dbReference type="Gene3D" id="2.40.70.10">
    <property type="entry name" value="Acid Proteases"/>
    <property type="match status" value="2"/>
</dbReference>
<dbReference type="InterPro" id="IPR001461">
    <property type="entry name" value="Aspartic_peptidase_A1"/>
</dbReference>
<dbReference type="InterPro" id="IPR001969">
    <property type="entry name" value="Aspartic_peptidase_AS"/>
</dbReference>
<dbReference type="InterPro" id="IPR033121">
    <property type="entry name" value="PEPTIDASE_A1"/>
</dbReference>
<dbReference type="InterPro" id="IPR021109">
    <property type="entry name" value="Peptidase_aspartic_dom_sf"/>
</dbReference>
<dbReference type="InterPro" id="IPR033819">
    <property type="entry name" value="Saccharopepsin"/>
</dbReference>
<dbReference type="PANTHER" id="PTHR47966">
    <property type="entry name" value="BETA-SITE APP-CLEAVING ENZYME, ISOFORM A-RELATED"/>
    <property type="match status" value="1"/>
</dbReference>
<dbReference type="PANTHER" id="PTHR47966:SF51">
    <property type="entry name" value="BETA-SITE APP-CLEAVING ENZYME, ISOFORM A-RELATED"/>
    <property type="match status" value="1"/>
</dbReference>
<dbReference type="Pfam" id="PF00026">
    <property type="entry name" value="Asp"/>
    <property type="match status" value="1"/>
</dbReference>
<dbReference type="PRINTS" id="PR00792">
    <property type="entry name" value="PEPSIN"/>
</dbReference>
<dbReference type="SUPFAM" id="SSF50630">
    <property type="entry name" value="Acid proteases"/>
    <property type="match status" value="1"/>
</dbReference>
<dbReference type="PROSITE" id="PS00141">
    <property type="entry name" value="ASP_PROTEASE"/>
    <property type="match status" value="2"/>
</dbReference>
<dbReference type="PROSITE" id="PS51767">
    <property type="entry name" value="PEPTIDASE_A1"/>
    <property type="match status" value="1"/>
</dbReference>
<evidence type="ECO:0000255" key="1">
    <source>
        <dbReference type="PROSITE-ProRule" id="PRU01103"/>
    </source>
</evidence>
<evidence type="ECO:0000255" key="2">
    <source>
        <dbReference type="PROSITE-ProRule" id="PRU10094"/>
    </source>
</evidence>
<evidence type="ECO:0000269" key="3">
    <source>
    </source>
</evidence>
<evidence type="ECO:0000269" key="4">
    <source>
    </source>
</evidence>
<evidence type="ECO:0000269" key="5">
    <source ref="6"/>
</evidence>
<evidence type="ECO:0000305" key="6"/>
<evidence type="ECO:0007829" key="7">
    <source>
        <dbReference type="PDB" id="1DPJ"/>
    </source>
</evidence>
<evidence type="ECO:0007829" key="8">
    <source>
        <dbReference type="PDB" id="1FQ8"/>
    </source>
</evidence>
<organism>
    <name type="scientific">Saccharomyces cerevisiae (strain ATCC 204508 / S288c)</name>
    <name type="common">Baker's yeast</name>
    <dbReference type="NCBI Taxonomy" id="559292"/>
    <lineage>
        <taxon>Eukaryota</taxon>
        <taxon>Fungi</taxon>
        <taxon>Dikarya</taxon>
        <taxon>Ascomycota</taxon>
        <taxon>Saccharomycotina</taxon>
        <taxon>Saccharomycetes</taxon>
        <taxon>Saccharomycetales</taxon>
        <taxon>Saccharomycetaceae</taxon>
        <taxon>Saccharomyces</taxon>
    </lineage>
</organism>
<protein>
    <recommendedName>
        <fullName>Saccharopepsin</fullName>
        <ecNumber>3.4.23.25</ecNumber>
    </recommendedName>
    <alternativeName>
        <fullName>Aspartate protease</fullName>
        <shortName>PrA</shortName>
        <shortName>Proteinase A</shortName>
    </alternativeName>
    <alternativeName>
        <fullName>Carboxypeptidase Y-deficient protein 4</fullName>
    </alternativeName>
    <alternativeName>
        <fullName>Proteinase YSCA</fullName>
    </alternativeName>
</protein>
<proteinExistence type="evidence at protein level"/>
<name>CARP_YEAST</name>